<feature type="chain" id="PRO_0000258708" description="Large ribosomal subunit protein bL35">
    <location>
        <begin position="1"/>
        <end position="65"/>
    </location>
</feature>
<feature type="region of interest" description="Disordered" evidence="2">
    <location>
        <begin position="30"/>
        <end position="65"/>
    </location>
</feature>
<feature type="compositionally biased region" description="Basic and acidic residues" evidence="2">
    <location>
        <begin position="56"/>
        <end position="65"/>
    </location>
</feature>
<organism>
    <name type="scientific">Mycoplasma mobile (strain ATCC 43663 / 163K / NCTC 11711)</name>
    <name type="common">Mesomycoplasma mobile</name>
    <dbReference type="NCBI Taxonomy" id="267748"/>
    <lineage>
        <taxon>Bacteria</taxon>
        <taxon>Bacillati</taxon>
        <taxon>Mycoplasmatota</taxon>
        <taxon>Mycoplasmoidales</taxon>
        <taxon>Metamycoplasmataceae</taxon>
        <taxon>Mesomycoplasma</taxon>
    </lineage>
</organism>
<protein>
    <recommendedName>
        <fullName evidence="1">Large ribosomal subunit protein bL35</fullName>
    </recommendedName>
    <alternativeName>
        <fullName evidence="3">50S ribosomal protein L35</fullName>
    </alternativeName>
</protein>
<keyword id="KW-1185">Reference proteome</keyword>
<keyword id="KW-0687">Ribonucleoprotein</keyword>
<keyword id="KW-0689">Ribosomal protein</keyword>
<gene>
    <name evidence="1" type="primary">rpmI</name>
    <name type="ordered locus">MMOB6280</name>
</gene>
<sequence>MMAKNKMKPKKALAKRIKISSTGKVKFGHAFRSHLAQNKSTKQKRQSKHGTFMHPTDYKRLKDLM</sequence>
<proteinExistence type="inferred from homology"/>
<dbReference type="EMBL" id="AE017308">
    <property type="protein sequence ID" value="AAT28114.1"/>
    <property type="molecule type" value="Genomic_DNA"/>
</dbReference>
<dbReference type="SMR" id="Q6KH17"/>
<dbReference type="STRING" id="267748.MMOB6280"/>
<dbReference type="KEGG" id="mmo:MMOB6280"/>
<dbReference type="eggNOG" id="COG0291">
    <property type="taxonomic scope" value="Bacteria"/>
</dbReference>
<dbReference type="HOGENOM" id="CLU_169643_3_1_14"/>
<dbReference type="Proteomes" id="UP000009072">
    <property type="component" value="Chromosome"/>
</dbReference>
<dbReference type="GO" id="GO:1990904">
    <property type="term" value="C:ribonucleoprotein complex"/>
    <property type="evidence" value="ECO:0007669"/>
    <property type="project" value="UniProtKB-KW"/>
</dbReference>
<dbReference type="GO" id="GO:0005840">
    <property type="term" value="C:ribosome"/>
    <property type="evidence" value="ECO:0007669"/>
    <property type="project" value="UniProtKB-KW"/>
</dbReference>
<dbReference type="GO" id="GO:0003735">
    <property type="term" value="F:structural constituent of ribosome"/>
    <property type="evidence" value="ECO:0007669"/>
    <property type="project" value="InterPro"/>
</dbReference>
<dbReference type="GO" id="GO:0006412">
    <property type="term" value="P:translation"/>
    <property type="evidence" value="ECO:0007669"/>
    <property type="project" value="UniProtKB-UniRule"/>
</dbReference>
<dbReference type="Gene3D" id="4.10.410.60">
    <property type="match status" value="1"/>
</dbReference>
<dbReference type="HAMAP" id="MF_00514">
    <property type="entry name" value="Ribosomal_bL35"/>
    <property type="match status" value="1"/>
</dbReference>
<dbReference type="InterPro" id="IPR001706">
    <property type="entry name" value="Ribosomal_bL35"/>
</dbReference>
<dbReference type="InterPro" id="IPR021137">
    <property type="entry name" value="Ribosomal_bL35-like"/>
</dbReference>
<dbReference type="InterPro" id="IPR037229">
    <property type="entry name" value="Ribosomal_bL35_sf"/>
</dbReference>
<dbReference type="NCBIfam" id="TIGR00001">
    <property type="entry name" value="rpmI_bact"/>
    <property type="match status" value="1"/>
</dbReference>
<dbReference type="Pfam" id="PF01632">
    <property type="entry name" value="Ribosomal_L35p"/>
    <property type="match status" value="1"/>
</dbReference>
<dbReference type="PRINTS" id="PR00064">
    <property type="entry name" value="RIBOSOMALL35"/>
</dbReference>
<dbReference type="SUPFAM" id="SSF143034">
    <property type="entry name" value="L35p-like"/>
    <property type="match status" value="1"/>
</dbReference>
<evidence type="ECO:0000255" key="1">
    <source>
        <dbReference type="HAMAP-Rule" id="MF_00514"/>
    </source>
</evidence>
<evidence type="ECO:0000256" key="2">
    <source>
        <dbReference type="SAM" id="MobiDB-lite"/>
    </source>
</evidence>
<evidence type="ECO:0000305" key="3"/>
<comment type="similarity">
    <text evidence="1">Belongs to the bacterial ribosomal protein bL35 family.</text>
</comment>
<accession>Q6KH17</accession>
<reference key="1">
    <citation type="journal article" date="2004" name="Genome Res.">
        <title>The complete genome and proteome of Mycoplasma mobile.</title>
        <authorList>
            <person name="Jaffe J.D."/>
            <person name="Stange-Thomann N."/>
            <person name="Smith C."/>
            <person name="DeCaprio D."/>
            <person name="Fisher S."/>
            <person name="Butler J."/>
            <person name="Calvo S."/>
            <person name="Elkins T."/>
            <person name="FitzGerald M.G."/>
            <person name="Hafez N."/>
            <person name="Kodira C.D."/>
            <person name="Major J."/>
            <person name="Wang S."/>
            <person name="Wilkinson J."/>
            <person name="Nicol R."/>
            <person name="Nusbaum C."/>
            <person name="Birren B."/>
            <person name="Berg H.C."/>
            <person name="Church G.M."/>
        </authorList>
    </citation>
    <scope>NUCLEOTIDE SEQUENCE [LARGE SCALE GENOMIC DNA]</scope>
    <source>
        <strain>ATCC 43663 / NCTC 11711 / 163 K</strain>
    </source>
</reference>
<name>RL35_MYCM1</name>